<proteinExistence type="inferred from homology"/>
<protein>
    <recommendedName>
        <fullName>Probable amino-acid ABC transporter permease protein y4tG</fullName>
    </recommendedName>
</protein>
<geneLocation type="plasmid">
    <name>sym pNGR234a</name>
</geneLocation>
<name>Y4TG_SINFN</name>
<keyword id="KW-0029">Amino-acid transport</keyword>
<keyword id="KW-0997">Cell inner membrane</keyword>
<keyword id="KW-1003">Cell membrane</keyword>
<keyword id="KW-0472">Membrane</keyword>
<keyword id="KW-0614">Plasmid</keyword>
<keyword id="KW-1185">Reference proteome</keyword>
<keyword id="KW-0812">Transmembrane</keyword>
<keyword id="KW-1133">Transmembrane helix</keyword>
<keyword id="KW-0813">Transport</keyword>
<feature type="chain" id="PRO_0000060298" description="Probable amino-acid ABC transporter permease protein y4tG">
    <location>
        <begin position="1"/>
        <end position="231"/>
    </location>
</feature>
<feature type="transmembrane region" description="Helical" evidence="1">
    <location>
        <begin position="9"/>
        <end position="29"/>
    </location>
</feature>
<feature type="transmembrane region" description="Helical" evidence="1">
    <location>
        <begin position="32"/>
        <end position="52"/>
    </location>
</feature>
<feature type="transmembrane region" description="Helical" evidence="1">
    <location>
        <begin position="64"/>
        <end position="84"/>
    </location>
</feature>
<feature type="transmembrane region" description="Helical" evidence="1">
    <location>
        <begin position="86"/>
        <end position="106"/>
    </location>
</feature>
<feature type="transmembrane region" description="Helical" evidence="1">
    <location>
        <begin position="161"/>
        <end position="181"/>
    </location>
</feature>
<feature type="transmembrane region" description="Helical" evidence="1">
    <location>
        <begin position="196"/>
        <end position="216"/>
    </location>
</feature>
<feature type="domain" description="ABC transmembrane type-1" evidence="1">
    <location>
        <begin position="28"/>
        <end position="217"/>
    </location>
</feature>
<sequence>MLYGFTWDTGNGELAFAISILPMLLMGLITTLQAAFLGFFVACVLGMVFAVLRGMRTRWVAWPAAVLIEFIRDTPLIAQLFFLYYVLPEYGIIFPAFLTGALALGIQYSAYISEVYRGGIQAVDHGQREAAKSLDLPPARTFTHVILPQAIPRVIPALGNYLVSIMKDVPVLSVVTIVEMLNAAKIIGDQTFNYLVPLSMVGGIYLILTIVASALVRIVDVNLPKRGVPLR</sequence>
<dbReference type="EMBL" id="U00090">
    <property type="protein sequence ID" value="AAB91860.1"/>
    <property type="molecule type" value="Genomic_DNA"/>
</dbReference>
<dbReference type="RefSeq" id="NP_444073.1">
    <property type="nucleotide sequence ID" value="NC_000914.2"/>
</dbReference>
<dbReference type="RefSeq" id="WP_010875190.1">
    <property type="nucleotide sequence ID" value="NC_000914.2"/>
</dbReference>
<dbReference type="SMR" id="P55661"/>
<dbReference type="KEGG" id="rhi:NGR_a01520"/>
<dbReference type="PATRIC" id="fig|394.7.peg.138"/>
<dbReference type="eggNOG" id="COG0765">
    <property type="taxonomic scope" value="Bacteria"/>
</dbReference>
<dbReference type="HOGENOM" id="CLU_019602_1_0_5"/>
<dbReference type="OrthoDB" id="9814550at2"/>
<dbReference type="Proteomes" id="UP000001054">
    <property type="component" value="Plasmid pNGR234a"/>
</dbReference>
<dbReference type="GO" id="GO:0043190">
    <property type="term" value="C:ATP-binding cassette (ABC) transporter complex"/>
    <property type="evidence" value="ECO:0007669"/>
    <property type="project" value="InterPro"/>
</dbReference>
<dbReference type="GO" id="GO:0022857">
    <property type="term" value="F:transmembrane transporter activity"/>
    <property type="evidence" value="ECO:0007669"/>
    <property type="project" value="InterPro"/>
</dbReference>
<dbReference type="GO" id="GO:0006865">
    <property type="term" value="P:amino acid transport"/>
    <property type="evidence" value="ECO:0007669"/>
    <property type="project" value="UniProtKB-KW"/>
</dbReference>
<dbReference type="CDD" id="cd06261">
    <property type="entry name" value="TM_PBP2"/>
    <property type="match status" value="1"/>
</dbReference>
<dbReference type="Gene3D" id="1.10.3720.10">
    <property type="entry name" value="MetI-like"/>
    <property type="match status" value="1"/>
</dbReference>
<dbReference type="InterPro" id="IPR010065">
    <property type="entry name" value="AA_ABC_transptr_permease_3TM"/>
</dbReference>
<dbReference type="InterPro" id="IPR043429">
    <property type="entry name" value="ArtM/GltK/GlnP/TcyL/YhdX-like"/>
</dbReference>
<dbReference type="InterPro" id="IPR014341">
    <property type="entry name" value="Ectoine_EhuD"/>
</dbReference>
<dbReference type="InterPro" id="IPR000515">
    <property type="entry name" value="MetI-like"/>
</dbReference>
<dbReference type="InterPro" id="IPR035906">
    <property type="entry name" value="MetI-like_sf"/>
</dbReference>
<dbReference type="NCBIfam" id="TIGR03003">
    <property type="entry name" value="ectoine_ehuD"/>
    <property type="match status" value="1"/>
</dbReference>
<dbReference type="NCBIfam" id="TIGR01726">
    <property type="entry name" value="HEQRo_perm_3TM"/>
    <property type="match status" value="1"/>
</dbReference>
<dbReference type="PANTHER" id="PTHR30614:SF0">
    <property type="entry name" value="L-CYSTINE TRANSPORT SYSTEM PERMEASE PROTEIN TCYL"/>
    <property type="match status" value="1"/>
</dbReference>
<dbReference type="PANTHER" id="PTHR30614">
    <property type="entry name" value="MEMBRANE COMPONENT OF AMINO ACID ABC TRANSPORTER"/>
    <property type="match status" value="1"/>
</dbReference>
<dbReference type="Pfam" id="PF00528">
    <property type="entry name" value="BPD_transp_1"/>
    <property type="match status" value="1"/>
</dbReference>
<dbReference type="SUPFAM" id="SSF161098">
    <property type="entry name" value="MetI-like"/>
    <property type="match status" value="1"/>
</dbReference>
<dbReference type="PROSITE" id="PS50928">
    <property type="entry name" value="ABC_TM1"/>
    <property type="match status" value="1"/>
</dbReference>
<comment type="function">
    <text>Probably part of the binding-protein-dependent transport system y4tEFGH for an amino acid. Probably responsible for the translocation of the substrate across the membrane.</text>
</comment>
<comment type="subcellular location">
    <subcellularLocation>
        <location evidence="2">Cell inner membrane</location>
        <topology evidence="1">Multi-pass membrane protein</topology>
    </subcellularLocation>
</comment>
<comment type="similarity">
    <text evidence="2">Belongs to the binding-protein-dependent transport system permease family. HisMQ subfamily.</text>
</comment>
<organism>
    <name type="scientific">Sinorhizobium fredii (strain NBRC 101917 / NGR234)</name>
    <dbReference type="NCBI Taxonomy" id="394"/>
    <lineage>
        <taxon>Bacteria</taxon>
        <taxon>Pseudomonadati</taxon>
        <taxon>Pseudomonadota</taxon>
        <taxon>Alphaproteobacteria</taxon>
        <taxon>Hyphomicrobiales</taxon>
        <taxon>Rhizobiaceae</taxon>
        <taxon>Sinorhizobium/Ensifer group</taxon>
        <taxon>Sinorhizobium</taxon>
    </lineage>
</organism>
<reference key="1">
    <citation type="journal article" date="1997" name="Nature">
        <title>Molecular basis of symbiosis between Rhizobium and legumes.</title>
        <authorList>
            <person name="Freiberg C.A."/>
            <person name="Fellay R."/>
            <person name="Bairoch A."/>
            <person name="Broughton W.J."/>
            <person name="Rosenthal A."/>
            <person name="Perret X."/>
        </authorList>
    </citation>
    <scope>NUCLEOTIDE SEQUENCE [LARGE SCALE GENOMIC DNA]</scope>
    <source>
        <strain>NBRC 101917 / NGR234</strain>
    </source>
</reference>
<reference key="2">
    <citation type="journal article" date="2009" name="Appl. Environ. Microbiol.">
        <title>Rhizobium sp. strain NGR234 possesses a remarkable number of secretion systems.</title>
        <authorList>
            <person name="Schmeisser C."/>
            <person name="Liesegang H."/>
            <person name="Krysciak D."/>
            <person name="Bakkou N."/>
            <person name="Le Quere A."/>
            <person name="Wollherr A."/>
            <person name="Heinemeyer I."/>
            <person name="Morgenstern B."/>
            <person name="Pommerening-Roeser A."/>
            <person name="Flores M."/>
            <person name="Palacios R."/>
            <person name="Brenner S."/>
            <person name="Gottschalk G."/>
            <person name="Schmitz R.A."/>
            <person name="Broughton W.J."/>
            <person name="Perret X."/>
            <person name="Strittmatter A.W."/>
            <person name="Streit W.R."/>
        </authorList>
    </citation>
    <scope>NUCLEOTIDE SEQUENCE [LARGE SCALE GENOMIC DNA]</scope>
    <source>
        <strain>NBRC 101917 / NGR234</strain>
    </source>
</reference>
<accession>P55661</accession>
<gene>
    <name type="ordered locus">NGR_a01520</name>
    <name type="ORF">y4tG</name>
</gene>
<evidence type="ECO:0000255" key="1">
    <source>
        <dbReference type="PROSITE-ProRule" id="PRU00441"/>
    </source>
</evidence>
<evidence type="ECO:0000305" key="2"/>